<sequence length="360" mass="39753">MTRSTTPPMRAKHSSAKRSPSRSAAKVNPVSVKPNKPLLSKALHPRNAHLQGYDFATLIIAMPALAAFVRPNPYGNPSIDFADPKAVKSLNAALLLSEYHINGWDIPEGYLCPPVPGRVDYLHYIADLLAVKGKVVKGASIRGLDIGTGANGIYPLLGIQTYGWQFVASDIDPVSIDNVAKIAQQNEKITAHLQLRLQPQPEHIFKNIIAADERFDVTLCNPPFHSSLAEASEGSLRKVKNLAKNQQQKHGQQSRKLAVSQAKPTLNFGGQKAELWCQGGEQQFLANMIKQSRDYANQVLWFTSLVSKSDNLKPCYQLLKQLNAVEVKTIEMTQGNKATRILAWSFLTPAIHQQWATLRP</sequence>
<gene>
    <name evidence="1" type="primary">rlmF</name>
    <name type="ordered locus">Sfri_0050</name>
</gene>
<protein>
    <recommendedName>
        <fullName evidence="1">Ribosomal RNA large subunit methyltransferase F</fullName>
        <ecNumber evidence="1">2.1.1.181</ecNumber>
    </recommendedName>
    <alternativeName>
        <fullName evidence="1">23S rRNA mA1618 methyltransferase</fullName>
    </alternativeName>
    <alternativeName>
        <fullName evidence="1">rRNA adenine N-6-methyltransferase</fullName>
    </alternativeName>
</protein>
<name>RLMF_SHEFN</name>
<reference key="1">
    <citation type="submission" date="2006-08" db="EMBL/GenBank/DDBJ databases">
        <title>Complete sequence of Shewanella frigidimarina NCIMB 400.</title>
        <authorList>
            <consortium name="US DOE Joint Genome Institute"/>
            <person name="Copeland A."/>
            <person name="Lucas S."/>
            <person name="Lapidus A."/>
            <person name="Barry K."/>
            <person name="Detter J.C."/>
            <person name="Glavina del Rio T."/>
            <person name="Hammon N."/>
            <person name="Israni S."/>
            <person name="Dalin E."/>
            <person name="Tice H."/>
            <person name="Pitluck S."/>
            <person name="Fredrickson J.K."/>
            <person name="Kolker E."/>
            <person name="McCuel L.A."/>
            <person name="DiChristina T."/>
            <person name="Nealson K.H."/>
            <person name="Newman D."/>
            <person name="Tiedje J.M."/>
            <person name="Zhou J."/>
            <person name="Romine M.F."/>
            <person name="Culley D.E."/>
            <person name="Serres M."/>
            <person name="Chertkov O."/>
            <person name="Brettin T."/>
            <person name="Bruce D."/>
            <person name="Han C."/>
            <person name="Tapia R."/>
            <person name="Gilna P."/>
            <person name="Schmutz J."/>
            <person name="Larimer F."/>
            <person name="Land M."/>
            <person name="Hauser L."/>
            <person name="Kyrpides N."/>
            <person name="Mikhailova N."/>
            <person name="Richardson P."/>
        </authorList>
    </citation>
    <scope>NUCLEOTIDE SEQUENCE [LARGE SCALE GENOMIC DNA]</scope>
    <source>
        <strain>NCIMB 400</strain>
    </source>
</reference>
<accession>Q08A02</accession>
<evidence type="ECO:0000255" key="1">
    <source>
        <dbReference type="HAMAP-Rule" id="MF_01848"/>
    </source>
</evidence>
<evidence type="ECO:0000256" key="2">
    <source>
        <dbReference type="SAM" id="MobiDB-lite"/>
    </source>
</evidence>
<comment type="function">
    <text evidence="1">Specifically methylates the adenine in position 1618 of 23S rRNA.</text>
</comment>
<comment type="catalytic activity">
    <reaction evidence="1">
        <text>adenosine(1618) in 23S rRNA + S-adenosyl-L-methionine = N(6)-methyladenosine(1618) in 23S rRNA + S-adenosyl-L-homocysteine + H(+)</text>
        <dbReference type="Rhea" id="RHEA:16497"/>
        <dbReference type="Rhea" id="RHEA-COMP:10229"/>
        <dbReference type="Rhea" id="RHEA-COMP:10231"/>
        <dbReference type="ChEBI" id="CHEBI:15378"/>
        <dbReference type="ChEBI" id="CHEBI:57856"/>
        <dbReference type="ChEBI" id="CHEBI:59789"/>
        <dbReference type="ChEBI" id="CHEBI:74411"/>
        <dbReference type="ChEBI" id="CHEBI:74449"/>
        <dbReference type="EC" id="2.1.1.181"/>
    </reaction>
</comment>
<comment type="subcellular location">
    <subcellularLocation>
        <location evidence="1">Cytoplasm</location>
    </subcellularLocation>
</comment>
<comment type="similarity">
    <text evidence="1">Belongs to the methyltransferase superfamily. METTL16/RlmF family.</text>
</comment>
<feature type="chain" id="PRO_0000349955" description="Ribosomal RNA large subunit methyltransferase F">
    <location>
        <begin position="1"/>
        <end position="360"/>
    </location>
</feature>
<feature type="region of interest" description="Disordered" evidence="2">
    <location>
        <begin position="1"/>
        <end position="38"/>
    </location>
</feature>
<feature type="compositionally biased region" description="Basic residues" evidence="2">
    <location>
        <begin position="10"/>
        <end position="20"/>
    </location>
</feature>
<dbReference type="EC" id="2.1.1.181" evidence="1"/>
<dbReference type="EMBL" id="CP000447">
    <property type="protein sequence ID" value="ABI69913.1"/>
    <property type="molecule type" value="Genomic_DNA"/>
</dbReference>
<dbReference type="RefSeq" id="WP_011635542.1">
    <property type="nucleotide sequence ID" value="NC_008345.1"/>
</dbReference>
<dbReference type="SMR" id="Q08A02"/>
<dbReference type="STRING" id="318167.Sfri_0050"/>
<dbReference type="KEGG" id="sfr:Sfri_0050"/>
<dbReference type="eggNOG" id="COG3129">
    <property type="taxonomic scope" value="Bacteria"/>
</dbReference>
<dbReference type="HOGENOM" id="CLU_027534_3_0_6"/>
<dbReference type="OrthoDB" id="1115728at2"/>
<dbReference type="Proteomes" id="UP000000684">
    <property type="component" value="Chromosome"/>
</dbReference>
<dbReference type="GO" id="GO:0005737">
    <property type="term" value="C:cytoplasm"/>
    <property type="evidence" value="ECO:0007669"/>
    <property type="project" value="UniProtKB-SubCell"/>
</dbReference>
<dbReference type="GO" id="GO:0052907">
    <property type="term" value="F:23S rRNA (adenine(1618)-N(6))-methyltransferase activity"/>
    <property type="evidence" value="ECO:0007669"/>
    <property type="project" value="UniProtKB-EC"/>
</dbReference>
<dbReference type="GO" id="GO:0070475">
    <property type="term" value="P:rRNA base methylation"/>
    <property type="evidence" value="ECO:0007669"/>
    <property type="project" value="TreeGrafter"/>
</dbReference>
<dbReference type="CDD" id="cd02440">
    <property type="entry name" value="AdoMet_MTases"/>
    <property type="match status" value="1"/>
</dbReference>
<dbReference type="Gene3D" id="3.40.50.150">
    <property type="entry name" value="Vaccinia Virus protein VP39"/>
    <property type="match status" value="1"/>
</dbReference>
<dbReference type="HAMAP" id="MF_01848">
    <property type="entry name" value="23SrRNA_methyltr_F"/>
    <property type="match status" value="1"/>
</dbReference>
<dbReference type="InterPro" id="IPR010286">
    <property type="entry name" value="METTL16/RlmF"/>
</dbReference>
<dbReference type="InterPro" id="IPR016909">
    <property type="entry name" value="rRNA_lsu_MeTfrase_F"/>
</dbReference>
<dbReference type="InterPro" id="IPR029063">
    <property type="entry name" value="SAM-dependent_MTases_sf"/>
</dbReference>
<dbReference type="NCBIfam" id="NF008725">
    <property type="entry name" value="PRK11727.1"/>
    <property type="match status" value="1"/>
</dbReference>
<dbReference type="PANTHER" id="PTHR13393:SF0">
    <property type="entry name" value="RNA N6-ADENOSINE-METHYLTRANSFERASE METTL16"/>
    <property type="match status" value="1"/>
</dbReference>
<dbReference type="PANTHER" id="PTHR13393">
    <property type="entry name" value="SAM-DEPENDENT METHYLTRANSFERASE"/>
    <property type="match status" value="1"/>
</dbReference>
<dbReference type="Pfam" id="PF05971">
    <property type="entry name" value="Methyltransf_10"/>
    <property type="match status" value="1"/>
</dbReference>
<dbReference type="PIRSF" id="PIRSF029038">
    <property type="entry name" value="Mtase_YbiN_prd"/>
    <property type="match status" value="1"/>
</dbReference>
<dbReference type="SUPFAM" id="SSF53335">
    <property type="entry name" value="S-adenosyl-L-methionine-dependent methyltransferases"/>
    <property type="match status" value="1"/>
</dbReference>
<proteinExistence type="inferred from homology"/>
<keyword id="KW-0963">Cytoplasm</keyword>
<keyword id="KW-0489">Methyltransferase</keyword>
<keyword id="KW-1185">Reference proteome</keyword>
<keyword id="KW-0698">rRNA processing</keyword>
<keyword id="KW-0949">S-adenosyl-L-methionine</keyword>
<keyword id="KW-0808">Transferase</keyword>
<organism>
    <name type="scientific">Shewanella frigidimarina (strain NCIMB 400)</name>
    <dbReference type="NCBI Taxonomy" id="318167"/>
    <lineage>
        <taxon>Bacteria</taxon>
        <taxon>Pseudomonadati</taxon>
        <taxon>Pseudomonadota</taxon>
        <taxon>Gammaproteobacteria</taxon>
        <taxon>Alteromonadales</taxon>
        <taxon>Shewanellaceae</taxon>
        <taxon>Shewanella</taxon>
    </lineage>
</organism>